<reference key="1">
    <citation type="online journal article" date="1997" name="Plant Gene Register">
        <title>AtJ10, an Arabidopsis thaliana dnaJ homologue resembling calmodulin-binding CAJ1 in Yeast.</title>
        <authorList>
            <person name="Lin W."/>
            <person name="Lin B.-L."/>
        </authorList>
        <locator>PGR97-146</locator>
    </citation>
    <scope>NUCLEOTIDE SEQUENCE [MRNA]</scope>
    <source>
        <strain>cv. Columbia</strain>
    </source>
</reference>
<reference key="2">
    <citation type="journal article" date="2000" name="Nature">
        <title>Sequence and analysis of chromosome 1 of the plant Arabidopsis thaliana.</title>
        <authorList>
            <person name="Theologis A."/>
            <person name="Ecker J.R."/>
            <person name="Palm C.J."/>
            <person name="Federspiel N.A."/>
            <person name="Kaul S."/>
            <person name="White O."/>
            <person name="Alonso J."/>
            <person name="Altafi H."/>
            <person name="Araujo R."/>
            <person name="Bowman C.L."/>
            <person name="Brooks S.Y."/>
            <person name="Buehler E."/>
            <person name="Chan A."/>
            <person name="Chao Q."/>
            <person name="Chen H."/>
            <person name="Cheuk R.F."/>
            <person name="Chin C.W."/>
            <person name="Chung M.K."/>
            <person name="Conn L."/>
            <person name="Conway A.B."/>
            <person name="Conway A.R."/>
            <person name="Creasy T.H."/>
            <person name="Dewar K."/>
            <person name="Dunn P."/>
            <person name="Etgu P."/>
            <person name="Feldblyum T.V."/>
            <person name="Feng J.-D."/>
            <person name="Fong B."/>
            <person name="Fujii C.Y."/>
            <person name="Gill J.E."/>
            <person name="Goldsmith A.D."/>
            <person name="Haas B."/>
            <person name="Hansen N.F."/>
            <person name="Hughes B."/>
            <person name="Huizar L."/>
            <person name="Hunter J.L."/>
            <person name="Jenkins J."/>
            <person name="Johnson-Hopson C."/>
            <person name="Khan S."/>
            <person name="Khaykin E."/>
            <person name="Kim C.J."/>
            <person name="Koo H.L."/>
            <person name="Kremenetskaia I."/>
            <person name="Kurtz D.B."/>
            <person name="Kwan A."/>
            <person name="Lam B."/>
            <person name="Langin-Hooper S."/>
            <person name="Lee A."/>
            <person name="Lee J.M."/>
            <person name="Lenz C.A."/>
            <person name="Li J.H."/>
            <person name="Li Y.-P."/>
            <person name="Lin X."/>
            <person name="Liu S.X."/>
            <person name="Liu Z.A."/>
            <person name="Luros J.S."/>
            <person name="Maiti R."/>
            <person name="Marziali A."/>
            <person name="Militscher J."/>
            <person name="Miranda M."/>
            <person name="Nguyen M."/>
            <person name="Nierman W.C."/>
            <person name="Osborne B.I."/>
            <person name="Pai G."/>
            <person name="Peterson J."/>
            <person name="Pham P.K."/>
            <person name="Rizzo M."/>
            <person name="Rooney T."/>
            <person name="Rowley D."/>
            <person name="Sakano H."/>
            <person name="Salzberg S.L."/>
            <person name="Schwartz J.R."/>
            <person name="Shinn P."/>
            <person name="Southwick A.M."/>
            <person name="Sun H."/>
            <person name="Tallon L.J."/>
            <person name="Tambunga G."/>
            <person name="Toriumi M.J."/>
            <person name="Town C.D."/>
            <person name="Utterback T."/>
            <person name="Van Aken S."/>
            <person name="Vaysberg M."/>
            <person name="Vysotskaia V.S."/>
            <person name="Walker M."/>
            <person name="Wu D."/>
            <person name="Yu G."/>
            <person name="Fraser C.M."/>
            <person name="Venter J.C."/>
            <person name="Davis R.W."/>
        </authorList>
    </citation>
    <scope>NUCLEOTIDE SEQUENCE [LARGE SCALE GENOMIC DNA]</scope>
    <source>
        <strain>cv. Columbia</strain>
    </source>
</reference>
<reference key="3">
    <citation type="journal article" date="2017" name="Plant J.">
        <title>Araport11: a complete reannotation of the Arabidopsis thaliana reference genome.</title>
        <authorList>
            <person name="Cheng C.Y."/>
            <person name="Krishnakumar V."/>
            <person name="Chan A.P."/>
            <person name="Thibaud-Nissen F."/>
            <person name="Schobel S."/>
            <person name="Town C.D."/>
        </authorList>
    </citation>
    <scope>GENOME REANNOTATION</scope>
    <source>
        <strain>cv. Columbia</strain>
    </source>
</reference>
<reference key="4">
    <citation type="journal article" date="2002" name="Science">
        <title>Functional annotation of a full-length Arabidopsis cDNA collection.</title>
        <authorList>
            <person name="Seki M."/>
            <person name="Narusaka M."/>
            <person name="Kamiya A."/>
            <person name="Ishida J."/>
            <person name="Satou M."/>
            <person name="Sakurai T."/>
            <person name="Nakajima M."/>
            <person name="Enju A."/>
            <person name="Akiyama K."/>
            <person name="Oono Y."/>
            <person name="Muramatsu M."/>
            <person name="Hayashizaki Y."/>
            <person name="Kawai J."/>
            <person name="Carninci P."/>
            <person name="Itoh M."/>
            <person name="Ishii Y."/>
            <person name="Arakawa T."/>
            <person name="Shibata K."/>
            <person name="Shinagawa A."/>
            <person name="Shinozaki K."/>
        </authorList>
    </citation>
    <scope>NUCLEOTIDE SEQUENCE [LARGE SCALE MRNA]</scope>
    <source>
        <strain>cv. Columbia</strain>
    </source>
</reference>
<reference key="5">
    <citation type="journal article" date="2003" name="Science">
        <title>Empirical analysis of transcriptional activity in the Arabidopsis genome.</title>
        <authorList>
            <person name="Yamada K."/>
            <person name="Lim J."/>
            <person name="Dale J.M."/>
            <person name="Chen H."/>
            <person name="Shinn P."/>
            <person name="Palm C.J."/>
            <person name="Southwick A.M."/>
            <person name="Wu H.C."/>
            <person name="Kim C.J."/>
            <person name="Nguyen M."/>
            <person name="Pham P.K."/>
            <person name="Cheuk R.F."/>
            <person name="Karlin-Newmann G."/>
            <person name="Liu S.X."/>
            <person name="Lam B."/>
            <person name="Sakano H."/>
            <person name="Wu T."/>
            <person name="Yu G."/>
            <person name="Miranda M."/>
            <person name="Quach H.L."/>
            <person name="Tripp M."/>
            <person name="Chang C.H."/>
            <person name="Lee J.M."/>
            <person name="Toriumi M.J."/>
            <person name="Chan M.M."/>
            <person name="Tang C.C."/>
            <person name="Onodera C.S."/>
            <person name="Deng J.M."/>
            <person name="Akiyama K."/>
            <person name="Ansari Y."/>
            <person name="Arakawa T."/>
            <person name="Banh J."/>
            <person name="Banno F."/>
            <person name="Bowser L."/>
            <person name="Brooks S.Y."/>
            <person name="Carninci P."/>
            <person name="Chao Q."/>
            <person name="Choy N."/>
            <person name="Enju A."/>
            <person name="Goldsmith A.D."/>
            <person name="Gurjal M."/>
            <person name="Hansen N.F."/>
            <person name="Hayashizaki Y."/>
            <person name="Johnson-Hopson C."/>
            <person name="Hsuan V.W."/>
            <person name="Iida K."/>
            <person name="Karnes M."/>
            <person name="Khan S."/>
            <person name="Koesema E."/>
            <person name="Ishida J."/>
            <person name="Jiang P.X."/>
            <person name="Jones T."/>
            <person name="Kawai J."/>
            <person name="Kamiya A."/>
            <person name="Meyers C."/>
            <person name="Nakajima M."/>
            <person name="Narusaka M."/>
            <person name="Seki M."/>
            <person name="Sakurai T."/>
            <person name="Satou M."/>
            <person name="Tamse R."/>
            <person name="Vaysberg M."/>
            <person name="Wallender E.K."/>
            <person name="Wong C."/>
            <person name="Yamamura Y."/>
            <person name="Yuan S."/>
            <person name="Shinozaki K."/>
            <person name="Davis R.W."/>
            <person name="Theologis A."/>
            <person name="Ecker J.R."/>
        </authorList>
    </citation>
    <scope>NUCLEOTIDE SEQUENCE [LARGE SCALE MRNA]</scope>
    <source>
        <strain>cv. Columbia</strain>
    </source>
</reference>
<reference key="6">
    <citation type="journal article" date="2001" name="Cell Stress Chaperones">
        <title>The J-domain proteins of Arabidopsis thaliana: an unexpectedly large and diverse family of chaperones.</title>
        <authorList>
            <person name="Miernyk J.A."/>
        </authorList>
    </citation>
    <scope>GENE FAMILY</scope>
    <scope>NOMENCLATURE</scope>
</reference>
<feature type="chain" id="PRO_0000071081" description="Chaperone protein dnaJ 10">
    <location>
        <begin position="1"/>
        <end position="398"/>
    </location>
</feature>
<feature type="domain" description="J" evidence="2">
    <location>
        <begin position="6"/>
        <end position="71"/>
    </location>
</feature>
<feature type="region of interest" description="Disordered" evidence="3">
    <location>
        <begin position="315"/>
        <end position="398"/>
    </location>
</feature>
<feature type="compositionally biased region" description="Polar residues" evidence="3">
    <location>
        <begin position="326"/>
        <end position="335"/>
    </location>
</feature>
<feature type="compositionally biased region" description="Polar residues" evidence="3">
    <location>
        <begin position="343"/>
        <end position="362"/>
    </location>
</feature>
<feature type="sequence conflict" description="In Ref. 4; BAC41997 and 5; AAO63414." evidence="4" ref="4 5">
    <original>Y</original>
    <variation>C</variation>
    <location>
        <position position="8"/>
    </location>
</feature>
<feature type="sequence conflict" description="In Ref. 1; CAA72705." evidence="4" ref="1">
    <original>Y</original>
    <variation>F</variation>
    <location>
        <position position="67"/>
    </location>
</feature>
<feature type="sequence conflict" description="In Ref. 1; CAA72705." evidence="4" ref="1">
    <original>A</original>
    <variation>T</variation>
    <location>
        <position position="85"/>
    </location>
</feature>
<feature type="sequence conflict" description="In Ref. 1; CAA72705." evidence="4" ref="1">
    <original>A</original>
    <variation>T</variation>
    <location>
        <position position="88"/>
    </location>
</feature>
<feature type="sequence conflict" description="In Ref. 1; CAA72705." evidence="4" ref="1">
    <original>E</original>
    <variation>V</variation>
    <location>
        <position position="97"/>
    </location>
</feature>
<feature type="sequence conflict" description="In Ref. 1; CAA72705." evidence="4" ref="1">
    <original>R</original>
    <variation>G</variation>
    <location>
        <position position="130"/>
    </location>
</feature>
<feature type="sequence conflict" description="In Ref. 1; CAA72705." evidence="4" ref="1">
    <original>A</original>
    <variation>T</variation>
    <location>
        <position position="141"/>
    </location>
</feature>
<feature type="sequence conflict" description="In Ref. 1; CAA72705." evidence="4" ref="1">
    <original>A</original>
    <variation>G</variation>
    <location>
        <position position="351"/>
    </location>
</feature>
<feature type="sequence conflict" description="In Ref. 1; CAA72705." evidence="4" ref="1">
    <original>S</original>
    <variation>N</variation>
    <location>
        <position position="363"/>
    </location>
</feature>
<feature type="sequence conflict" description="In Ref. 1; CAA72705." evidence="4" ref="1">
    <original>E</original>
    <variation>K</variation>
    <location>
        <position position="367"/>
    </location>
</feature>
<comment type="function">
    <text evidence="1">Plays a continuous role in plant development probably in the structural organization of compartments.</text>
</comment>
<comment type="similarity">
    <text evidence="4">Belongs to the DnaJ family. C/III subfamily.</text>
</comment>
<comment type="sequence caution" evidence="4">
    <conflict type="frameshift">
        <sequence resource="EMBL-CDS" id="CAA72705"/>
    </conflict>
</comment>
<accession>Q8GYX8</accession>
<accession>O04662</accession>
<accession>Q9SRE3</accession>
<organism>
    <name type="scientific">Arabidopsis thaliana</name>
    <name type="common">Mouse-ear cress</name>
    <dbReference type="NCBI Taxonomy" id="3702"/>
    <lineage>
        <taxon>Eukaryota</taxon>
        <taxon>Viridiplantae</taxon>
        <taxon>Streptophyta</taxon>
        <taxon>Embryophyta</taxon>
        <taxon>Tracheophyta</taxon>
        <taxon>Spermatophyta</taxon>
        <taxon>Magnoliopsida</taxon>
        <taxon>eudicotyledons</taxon>
        <taxon>Gunneridae</taxon>
        <taxon>Pentapetalae</taxon>
        <taxon>rosids</taxon>
        <taxon>malvids</taxon>
        <taxon>Brassicales</taxon>
        <taxon>Brassicaceae</taxon>
        <taxon>Camelineae</taxon>
        <taxon>Arabidopsis</taxon>
    </lineage>
</organism>
<sequence>MVKETEYYDVLGVSPTATESEIKKAYYIKARQVHPDKNPNDPQAAHNFQVLGEAYQVLSDSGQRQAYDACGKSGISTDAIIDPAAIFAMLFGSELFEGYIGQLAMASMASLDIFTEGDQFDTKKIQEKLRIVQKEREDKLAQILKDRLNEYVINKDEFISNAEAEVARLSNAAYGVDMLNTIGYIYVRQAAKELGKKAIYLGVPFIAEWFRNKGHFIKSQLTAATGAYALFQLQEEMKRQLNTEGNYTEEELEEYLQAHKRVMIDSLWKLNVADIEATLCRVCQLVLQDPEAKREELRTRARGLKALGRIFQRAKTASESDPLENSEPQKLNGNGKNHDEDTSTSPKSSEASHSTSGPQEPQSPYVEEFKLGDEQFNYYFPRPAPPPGAGKYSSSGYD</sequence>
<gene>
    <name type="primary">ATJ10</name>
    <name type="synonym">C10</name>
    <name type="synonym">J10</name>
    <name type="ordered locus">At1g76700</name>
    <name type="ORF">F28O16.7</name>
</gene>
<dbReference type="EMBL" id="Y11969">
    <property type="protein sequence ID" value="CAA72705.1"/>
    <property type="status" value="ALT_FRAME"/>
    <property type="molecule type" value="mRNA"/>
</dbReference>
<dbReference type="EMBL" id="AC010718">
    <property type="protein sequence ID" value="AAF04450.1"/>
    <property type="molecule type" value="Genomic_DNA"/>
</dbReference>
<dbReference type="EMBL" id="CP002684">
    <property type="protein sequence ID" value="AEE35877.1"/>
    <property type="molecule type" value="Genomic_DNA"/>
</dbReference>
<dbReference type="EMBL" id="AK117326">
    <property type="protein sequence ID" value="BAC41997.1"/>
    <property type="molecule type" value="mRNA"/>
</dbReference>
<dbReference type="EMBL" id="BT005350">
    <property type="protein sequence ID" value="AAO63414.1"/>
    <property type="molecule type" value="mRNA"/>
</dbReference>
<dbReference type="PIR" id="D96795">
    <property type="entry name" value="D96795"/>
</dbReference>
<dbReference type="RefSeq" id="NP_177796.1">
    <property type="nucleotide sequence ID" value="NM_106320.4"/>
</dbReference>
<dbReference type="SMR" id="Q8GYX8"/>
<dbReference type="FunCoup" id="Q8GYX8">
    <property type="interactions" value="494"/>
</dbReference>
<dbReference type="STRING" id="3702.Q8GYX8"/>
<dbReference type="GlyGen" id="Q8GYX8">
    <property type="glycosylation" value="1 site"/>
</dbReference>
<dbReference type="iPTMnet" id="Q8GYX8"/>
<dbReference type="PaxDb" id="3702-AT1G76700.1"/>
<dbReference type="ProteomicsDB" id="222077"/>
<dbReference type="EnsemblPlants" id="AT1G76700.1">
    <property type="protein sequence ID" value="AT1G76700.1"/>
    <property type="gene ID" value="AT1G76700"/>
</dbReference>
<dbReference type="GeneID" id="844003"/>
<dbReference type="Gramene" id="AT1G76700.1">
    <property type="protein sequence ID" value="AT1G76700.1"/>
    <property type="gene ID" value="AT1G76700"/>
</dbReference>
<dbReference type="KEGG" id="ath:AT1G76700"/>
<dbReference type="Araport" id="AT1G76700"/>
<dbReference type="TAIR" id="AT1G76700"/>
<dbReference type="eggNOG" id="KOG0691">
    <property type="taxonomic scope" value="Eukaryota"/>
</dbReference>
<dbReference type="HOGENOM" id="CLU_025145_1_0_1"/>
<dbReference type="InParanoid" id="Q8GYX8"/>
<dbReference type="OMA" id="DMKIESF"/>
<dbReference type="OrthoDB" id="10250354at2759"/>
<dbReference type="PhylomeDB" id="Q8GYX8"/>
<dbReference type="PRO" id="PR:Q8GYX8"/>
<dbReference type="Proteomes" id="UP000006548">
    <property type="component" value="Chromosome 1"/>
</dbReference>
<dbReference type="ExpressionAtlas" id="Q8GYX8">
    <property type="expression patterns" value="baseline and differential"/>
</dbReference>
<dbReference type="CDD" id="cd06257">
    <property type="entry name" value="DnaJ"/>
    <property type="match status" value="1"/>
</dbReference>
<dbReference type="FunFam" id="1.10.287.110:FF:000086">
    <property type="entry name" value="Chaperone protein dnaJ 10"/>
    <property type="match status" value="1"/>
</dbReference>
<dbReference type="Gene3D" id="1.10.287.110">
    <property type="entry name" value="DnaJ domain"/>
    <property type="match status" value="1"/>
</dbReference>
<dbReference type="InterPro" id="IPR001623">
    <property type="entry name" value="DnaJ_domain"/>
</dbReference>
<dbReference type="InterPro" id="IPR018253">
    <property type="entry name" value="DnaJ_domain_CS"/>
</dbReference>
<dbReference type="InterPro" id="IPR026894">
    <property type="entry name" value="DnaJ_X"/>
</dbReference>
<dbReference type="InterPro" id="IPR052423">
    <property type="entry name" value="EMIR"/>
</dbReference>
<dbReference type="InterPro" id="IPR036869">
    <property type="entry name" value="J_dom_sf"/>
</dbReference>
<dbReference type="PANTHER" id="PTHR44094:SF17">
    <property type="entry name" value="CHAPERONE PROTEIN DNAJ 10"/>
    <property type="match status" value="1"/>
</dbReference>
<dbReference type="PANTHER" id="PTHR44094">
    <property type="entry name" value="DNAJ HEAT SHOCK N-TERMINAL DOMAIN-CONTAINING PROTEIN"/>
    <property type="match status" value="1"/>
</dbReference>
<dbReference type="Pfam" id="PF00226">
    <property type="entry name" value="DnaJ"/>
    <property type="match status" value="1"/>
</dbReference>
<dbReference type="Pfam" id="PF14308">
    <property type="entry name" value="DnaJ-X"/>
    <property type="match status" value="1"/>
</dbReference>
<dbReference type="PRINTS" id="PR00625">
    <property type="entry name" value="JDOMAIN"/>
</dbReference>
<dbReference type="SMART" id="SM00271">
    <property type="entry name" value="DnaJ"/>
    <property type="match status" value="1"/>
</dbReference>
<dbReference type="SUPFAM" id="SSF46565">
    <property type="entry name" value="Chaperone J-domain"/>
    <property type="match status" value="1"/>
</dbReference>
<dbReference type="PROSITE" id="PS00636">
    <property type="entry name" value="DNAJ_1"/>
    <property type="match status" value="1"/>
</dbReference>
<dbReference type="PROSITE" id="PS50076">
    <property type="entry name" value="DNAJ_2"/>
    <property type="match status" value="1"/>
</dbReference>
<name>DNJ10_ARATH</name>
<proteinExistence type="evidence at transcript level"/>
<protein>
    <recommendedName>
        <fullName>Chaperone protein dnaJ 10</fullName>
        <shortName>AtDjC10</shortName>
        <shortName>AtJ10</shortName>
    </recommendedName>
</protein>
<keyword id="KW-0143">Chaperone</keyword>
<keyword id="KW-1185">Reference proteome</keyword>
<evidence type="ECO:0000250" key="1"/>
<evidence type="ECO:0000255" key="2">
    <source>
        <dbReference type="PROSITE-ProRule" id="PRU00286"/>
    </source>
</evidence>
<evidence type="ECO:0000256" key="3">
    <source>
        <dbReference type="SAM" id="MobiDB-lite"/>
    </source>
</evidence>
<evidence type="ECO:0000305" key="4"/>